<reference key="1">
    <citation type="journal article" date="1997" name="Nature">
        <title>Molecular basis of symbiosis between Rhizobium and legumes.</title>
        <authorList>
            <person name="Freiberg C.A."/>
            <person name="Fellay R."/>
            <person name="Bairoch A."/>
            <person name="Broughton W.J."/>
            <person name="Rosenthal A."/>
            <person name="Perret X."/>
        </authorList>
    </citation>
    <scope>NUCLEOTIDE SEQUENCE [LARGE SCALE GENOMIC DNA]</scope>
    <source>
        <strain>NBRC 101917 / NGR234</strain>
    </source>
</reference>
<reference key="2">
    <citation type="journal article" date="2009" name="Appl. Environ. Microbiol.">
        <title>Rhizobium sp. strain NGR234 possesses a remarkable number of secretion systems.</title>
        <authorList>
            <person name="Schmeisser C."/>
            <person name="Liesegang H."/>
            <person name="Krysciak D."/>
            <person name="Bakkou N."/>
            <person name="Le Quere A."/>
            <person name="Wollherr A."/>
            <person name="Heinemeyer I."/>
            <person name="Morgenstern B."/>
            <person name="Pommerening-Roeser A."/>
            <person name="Flores M."/>
            <person name="Palacios R."/>
            <person name="Brenner S."/>
            <person name="Gottschalk G."/>
            <person name="Schmitz R.A."/>
            <person name="Broughton W.J."/>
            <person name="Perret X."/>
            <person name="Strittmatter A.W."/>
            <person name="Streit W.R."/>
        </authorList>
    </citation>
    <scope>NUCLEOTIDE SEQUENCE [LARGE SCALE GENOMIC DNA]</scope>
    <source>
        <strain>NBRC 101917 / NGR234</strain>
    </source>
</reference>
<reference key="3">
    <citation type="journal article" date="1998" name="J. Biol. Chem.">
        <title>nolO and noeI (HsnIII) of Rhizobium sp. NGR234 are involved in 3-O-carbamoylation and 2-O-methylation of Nod factors.</title>
        <authorList>
            <person name="Jabbouri S."/>
            <person name="Relic B."/>
            <person name="Hanin M."/>
            <person name="Kamalaprija P."/>
            <person name="Burger U."/>
            <person name="Prome D."/>
            <person name="Prome J.C."/>
            <person name="Broughton W.J."/>
        </authorList>
    </citation>
    <scope>FUNCTION IN METHYLATION</scope>
    <scope>DISRUPTION PHENOTYPE</scope>
    <source>
        <strain>NBRC 101917 / NGR234</strain>
    </source>
</reference>
<feature type="chain" id="PRO_0000096924" description="2-O-methyltransferase NoeI">
    <location>
        <begin position="1"/>
        <end position="243"/>
    </location>
</feature>
<sequence>MEVGRYLKEGLLISLQQRLREFAEGIRKPTSSLKVHRQIVSLLEKPDPVILDIGCNDGSDARRFLQLRPKAQLFCFEPDPRAAARCRENMGPLDRMRLFEVAISDRNGRIDFHPSNGDGDAKEWDLSGSIRQPKNHLSEYQWVRFDGPISVETRRLDDWCSEAGLESIDLIWMDVQGAESDVIAGGKETLTKTRFIYTEYSDQELYEGQLPLRAILDLLPSFELVAQFPRGVEGDVLLRNTKL</sequence>
<keyword id="KW-0963">Cytoplasm</keyword>
<keyword id="KW-0489">Methyltransferase</keyword>
<keyword id="KW-0536">Nodulation</keyword>
<keyword id="KW-0614">Plasmid</keyword>
<keyword id="KW-1185">Reference proteome</keyword>
<keyword id="KW-0808">Transferase</keyword>
<organism>
    <name type="scientific">Sinorhizobium fredii (strain NBRC 101917 / NGR234)</name>
    <dbReference type="NCBI Taxonomy" id="394"/>
    <lineage>
        <taxon>Bacteria</taxon>
        <taxon>Pseudomonadati</taxon>
        <taxon>Pseudomonadota</taxon>
        <taxon>Alphaproteobacteria</taxon>
        <taxon>Hyphomicrobiales</taxon>
        <taxon>Rhizobiaceae</taxon>
        <taxon>Sinorhizobium/Ensifer group</taxon>
        <taxon>Sinorhizobium</taxon>
    </lineage>
</organism>
<geneLocation type="plasmid">
    <name>sym pNGR234a</name>
</geneLocation>
<accession>P55473</accession>
<dbReference type="EC" id="2.1.1.-"/>
<dbReference type="EMBL" id="U00090">
    <property type="protein sequence ID" value="AAB91691.1"/>
    <property type="molecule type" value="Genomic_DNA"/>
</dbReference>
<dbReference type="RefSeq" id="NP_443879.1">
    <property type="nucleotide sequence ID" value="NC_000914.2"/>
</dbReference>
<dbReference type="RefSeq" id="WP_010875361.1">
    <property type="nucleotide sequence ID" value="NC_000914.2"/>
</dbReference>
<dbReference type="SMR" id="P55473"/>
<dbReference type="KEGG" id="rhi:NGR_a03470"/>
<dbReference type="eggNOG" id="COG0275">
    <property type="taxonomic scope" value="Bacteria"/>
</dbReference>
<dbReference type="HOGENOM" id="CLU_068034_3_2_5"/>
<dbReference type="OrthoDB" id="9814604at2"/>
<dbReference type="Proteomes" id="UP000001054">
    <property type="component" value="Plasmid pNGR234a"/>
</dbReference>
<dbReference type="GO" id="GO:0005737">
    <property type="term" value="C:cytoplasm"/>
    <property type="evidence" value="ECO:0007669"/>
    <property type="project" value="UniProtKB-SubCell"/>
</dbReference>
<dbReference type="GO" id="GO:0008171">
    <property type="term" value="F:O-methyltransferase activity"/>
    <property type="evidence" value="ECO:0007669"/>
    <property type="project" value="TreeGrafter"/>
</dbReference>
<dbReference type="GO" id="GO:0032259">
    <property type="term" value="P:methylation"/>
    <property type="evidence" value="ECO:0007669"/>
    <property type="project" value="UniProtKB-KW"/>
</dbReference>
<dbReference type="Gene3D" id="3.40.50.150">
    <property type="entry name" value="Vaccinia Virus protein VP39"/>
    <property type="match status" value="1"/>
</dbReference>
<dbReference type="InterPro" id="IPR053188">
    <property type="entry name" value="FkbM_Methyltransferase"/>
</dbReference>
<dbReference type="InterPro" id="IPR006342">
    <property type="entry name" value="FkbM_mtfrase"/>
</dbReference>
<dbReference type="InterPro" id="IPR029063">
    <property type="entry name" value="SAM-dependent_MTases_sf"/>
</dbReference>
<dbReference type="NCBIfam" id="TIGR01444">
    <property type="entry name" value="fkbM_fam"/>
    <property type="match status" value="1"/>
</dbReference>
<dbReference type="PANTHER" id="PTHR36973:SF4">
    <property type="entry name" value="NODULATION PROTEIN"/>
    <property type="match status" value="1"/>
</dbReference>
<dbReference type="PANTHER" id="PTHR36973">
    <property type="entry name" value="SLL1456 PROTEIN-RELATED"/>
    <property type="match status" value="1"/>
</dbReference>
<dbReference type="Pfam" id="PF05050">
    <property type="entry name" value="Methyltransf_21"/>
    <property type="match status" value="1"/>
</dbReference>
<dbReference type="SUPFAM" id="SSF53335">
    <property type="entry name" value="S-adenosyl-L-methionine-dependent methyltransferases"/>
    <property type="match status" value="1"/>
</dbReference>
<name>NOEI_SINFN</name>
<evidence type="ECO:0000269" key="1">
    <source>
    </source>
</evidence>
<evidence type="ECO:0000305" key="2"/>
<comment type="function">
    <text evidence="1">Required for 2-O-methylation of the fucosyl group of Nod factors.</text>
</comment>
<comment type="subcellular location">
    <subcellularLocation>
        <location evidence="2">Cytoplasm</location>
    </subcellularLocation>
</comment>
<comment type="disruption phenotype">
    <text evidence="1">Disruption of the gene has no effect on nodulation.</text>
</comment>
<comment type="similarity">
    <text evidence="2">Belongs to the FkbM methyltransferase family.</text>
</comment>
<gene>
    <name type="primary">noeI</name>
    <name type="ordered locus">NGR_a03470</name>
    <name type="ORF">y4hC</name>
</gene>
<proteinExistence type="evidence at protein level"/>
<protein>
    <recommendedName>
        <fullName>2-O-methyltransferase NoeI</fullName>
        <ecNumber>2.1.1.-</ecNumber>
    </recommendedName>
    <alternativeName>
        <fullName>Nodulation protein NoeI</fullName>
    </alternativeName>
</protein>